<gene>
    <name evidence="5" type="primary">verJ</name>
</gene>
<keyword id="KW-0224">Dipeptidase</keyword>
<keyword id="KW-0378">Hydrolase</keyword>
<keyword id="KW-0479">Metal-binding</keyword>
<keyword id="KW-0482">Metalloprotease</keyword>
<keyword id="KW-0645">Protease</keyword>
<keyword id="KW-0862">Zinc</keyword>
<feature type="chain" id="PRO_0000450165" description="Dipeptidase verJ">
    <location>
        <begin position="1" status="less than"/>
        <end position="388"/>
    </location>
</feature>
<feature type="binding site" evidence="2">
    <location>
        <position position="29"/>
    </location>
    <ligand>
        <name>Zn(2+)</name>
        <dbReference type="ChEBI" id="CHEBI:29105"/>
        <note>catalytic</note>
    </ligand>
</feature>
<feature type="binding site" evidence="2">
    <location>
        <position position="31"/>
    </location>
    <ligand>
        <name>Zn(2+)</name>
        <dbReference type="ChEBI" id="CHEBI:29105"/>
        <note>catalytic</note>
    </ligand>
</feature>
<feature type="binding site" evidence="2">
    <location>
        <position position="142"/>
    </location>
    <ligand>
        <name>Zn(2+)</name>
        <dbReference type="ChEBI" id="CHEBI:29105"/>
        <note>catalytic</note>
    </ligand>
</feature>
<feature type="binding site" evidence="2">
    <location>
        <position position="169"/>
    </location>
    <ligand>
        <name>substrate</name>
    </ligand>
</feature>
<feature type="binding site" evidence="2">
    <location>
        <position position="243"/>
    </location>
    <ligand>
        <name>substrate</name>
    </ligand>
</feature>
<feature type="binding site" evidence="2">
    <location>
        <position position="300"/>
    </location>
    <ligand>
        <name>substrate</name>
    </ligand>
</feature>
<feature type="non-terminal residue" evidence="6">
    <location>
        <position position="1"/>
    </location>
</feature>
<organism>
    <name type="scientific">Clonostachys rogersoniana</name>
    <dbReference type="NCBI Taxonomy" id="122658"/>
    <lineage>
        <taxon>Eukaryota</taxon>
        <taxon>Fungi</taxon>
        <taxon>Dikarya</taxon>
        <taxon>Ascomycota</taxon>
        <taxon>Pezizomycotina</taxon>
        <taxon>Sordariomycetes</taxon>
        <taxon>Hypocreomycetidae</taxon>
        <taxon>Hypocreales</taxon>
        <taxon>Bionectriaceae</taxon>
        <taxon>Clonostachys</taxon>
    </lineage>
</organism>
<reference key="1">
    <citation type="journal article" date="2017" name="Fungal Genet. Biol.">
        <title>Identification and characterization of the verticillin biosynthetic gene cluster in Clonostachys rogersoniana.</title>
        <authorList>
            <person name="Wang Y."/>
            <person name="Hu P."/>
            <person name="Pan Y."/>
            <person name="Zhu Y."/>
            <person name="Liu X."/>
            <person name="Che Y."/>
            <person name="Liu G."/>
        </authorList>
    </citation>
    <scope>NUCLEOTIDE SEQUENCE [GENOMIC DNA]</scope>
    <scope>FUNCTION</scope>
    <scope>DISRUPTION PHENOTYPE</scope>
    <scope>PATHWAY</scope>
    <source>
        <strain>XZC04-CC-302</strain>
    </source>
</reference>
<reference key="2">
    <citation type="journal article" date="2017" name="Microbiology">
        <title>VerZ, a Zn(II)2Cys6 DNA-binding protein, regulates the biosynthesis of verticillin in Clonostachys rogersoniana.</title>
        <authorList>
            <person name="Guo Z."/>
            <person name="Hao T."/>
            <person name="Wang Y."/>
            <person name="Pan Y."/>
            <person name="Ren F."/>
            <person name="Liu X."/>
            <person name="Che Y."/>
            <person name="Liu G."/>
        </authorList>
    </citation>
    <scope>INDUCTION</scope>
</reference>
<accession>A0A1U9YI27</accession>
<comment type="function">
    <text evidence="3 7">Dipeptidase; part of the gene cluster that mediates the biosynthesis of 11'-deoxyverticillin A, one of the dimeric epipolythiodioxopiperazines (ETPs) from the verticillin family that act as mycotoxins (PubMed:28376389). 11'-deoxyverticillin A is required for normal conidiation (PubMed:28376389). The nonribosomal peptide synthetase verP is speculated to be responsible for condensation of amino acids to form the carbon skeleton of verticillin, whereas the cluster-specific tailoring enzymes are involved in further modifications leading to the production of 11'-deoxyverticillin A (Probable).</text>
</comment>
<comment type="catalytic activity">
    <reaction evidence="1">
        <text>an L-aminoacyl-L-amino acid + H2O = 2 an L-alpha-amino acid</text>
        <dbReference type="Rhea" id="RHEA:48940"/>
        <dbReference type="ChEBI" id="CHEBI:15377"/>
        <dbReference type="ChEBI" id="CHEBI:59869"/>
        <dbReference type="ChEBI" id="CHEBI:77460"/>
        <dbReference type="EC" id="3.4.13.19"/>
    </reaction>
</comment>
<comment type="cofactor">
    <cofactor evidence="2">
        <name>Zn(2+)</name>
        <dbReference type="ChEBI" id="CHEBI:29105"/>
    </cofactor>
</comment>
<comment type="pathway">
    <text evidence="3">Mycotoxin biosynthesis.</text>
</comment>
<comment type="induction">
    <text evidence="4">Expression is regulated by the cluster-specific regulator verZ.</text>
</comment>
<comment type="disruption phenotype">
    <text evidence="3">Completely abolishes the 11'-deoxyverticillin A production.</text>
</comment>
<comment type="similarity">
    <text evidence="2">Belongs to the metallo-dependent hydrolases superfamily. Peptidase M19 family.</text>
</comment>
<comment type="sequence caution" evidence="6">
    <conflict type="erroneous gene model prediction">
        <sequence resource="EMBL-CDS" id="AQZ42165"/>
    </conflict>
    <text>Due to a wrong gene model prediction, the N-terminal sequence was wrong and only part of the N-terminus could be recovered.</text>
</comment>
<dbReference type="EC" id="3.4.13.19" evidence="1"/>
<dbReference type="EMBL" id="KY359203">
    <property type="protein sequence ID" value="AQZ42165.1"/>
    <property type="status" value="ALT_SEQ"/>
    <property type="molecule type" value="Genomic_DNA"/>
</dbReference>
<dbReference type="SMR" id="A0A1U9YI27"/>
<dbReference type="GO" id="GO:0046872">
    <property type="term" value="F:metal ion binding"/>
    <property type="evidence" value="ECO:0007669"/>
    <property type="project" value="UniProtKB-KW"/>
</dbReference>
<dbReference type="GO" id="GO:0070573">
    <property type="term" value="F:metallodipeptidase activity"/>
    <property type="evidence" value="ECO:0007669"/>
    <property type="project" value="InterPro"/>
</dbReference>
<dbReference type="GO" id="GO:0006508">
    <property type="term" value="P:proteolysis"/>
    <property type="evidence" value="ECO:0007669"/>
    <property type="project" value="UniProtKB-KW"/>
</dbReference>
<dbReference type="CDD" id="cd01301">
    <property type="entry name" value="rDP_like"/>
    <property type="match status" value="1"/>
</dbReference>
<dbReference type="Gene3D" id="3.20.20.140">
    <property type="entry name" value="Metal-dependent hydrolases"/>
    <property type="match status" value="1"/>
</dbReference>
<dbReference type="InterPro" id="IPR032466">
    <property type="entry name" value="Metal_Hydrolase"/>
</dbReference>
<dbReference type="InterPro" id="IPR008257">
    <property type="entry name" value="Pept_M19"/>
</dbReference>
<dbReference type="PANTHER" id="PTHR10443:SF12">
    <property type="entry name" value="DIPEPTIDASE"/>
    <property type="match status" value="1"/>
</dbReference>
<dbReference type="PANTHER" id="PTHR10443">
    <property type="entry name" value="MICROSOMAL DIPEPTIDASE"/>
    <property type="match status" value="1"/>
</dbReference>
<dbReference type="Pfam" id="PF01244">
    <property type="entry name" value="Peptidase_M19"/>
    <property type="match status" value="1"/>
</dbReference>
<dbReference type="SUPFAM" id="SSF51556">
    <property type="entry name" value="Metallo-dependent hydrolases"/>
    <property type="match status" value="1"/>
</dbReference>
<dbReference type="PROSITE" id="PS51365">
    <property type="entry name" value="RENAL_DIPEPTIDASE_2"/>
    <property type="match status" value="1"/>
</dbReference>
<name>VERJ_CLORO</name>
<evidence type="ECO:0000250" key="1">
    <source>
        <dbReference type="UniProtKB" id="Q4WMJ8"/>
    </source>
</evidence>
<evidence type="ECO:0000255" key="2">
    <source>
        <dbReference type="PROSITE-ProRule" id="PRU10073"/>
    </source>
</evidence>
<evidence type="ECO:0000269" key="3">
    <source>
    </source>
</evidence>
<evidence type="ECO:0000269" key="4">
    <source>
    </source>
</evidence>
<evidence type="ECO:0000303" key="5">
    <source>
    </source>
</evidence>
<evidence type="ECO:0000305" key="6"/>
<evidence type="ECO:0000305" key="7">
    <source>
    </source>
</evidence>
<protein>
    <recommendedName>
        <fullName evidence="1">Dipeptidase verJ</fullName>
        <ecNumber evidence="1">3.4.13.19</ecNumber>
    </recommendedName>
    <alternativeName>
        <fullName evidence="5">Verticillin biosynthesis cluster protein J</fullName>
    </alternativeName>
</protein>
<sequence length="388" mass="43458">PIVSKMALLDDNLSKALKLLADVPLIDGHNDFPYFIRGWFPEQIDSLDCRNVRIAHTDLERLNQGRVGGVFWSAYVPCPDRHAKNDFVVDAQYESLRATMQQIDIIHTLIERYSDRLGLARTSSEVWEVFRSGRIASLIGVEGLHQIANSPGVMRNLYRLGVRYITLTHDSNNLYADSTNSSGPFHGGLSRDGISIVKEMNRIGMMVDLSHTSVATQKHVLAISKAPVIFSHSSCASVTEHPRNSPDDVLDMLKANGGVFMITFIRKPTDAESPTLEKVADHVQHVGDRIGYEHVGIGSDFDGVMLTASGLDDVSKFPLLIAELLKRGVSDHSIKNMIGLNVLRVMDSVEEVSMKMKETGEEMLHEVFEEIWDEKMRDEVRKTRDIFD</sequence>
<proteinExistence type="evidence at transcript level"/>